<gene>
    <name type="primary">msrA2</name>
    <name type="synonym">msrA</name>
    <name type="ordered locus">SAOUHSC_01432</name>
</gene>
<sequence>MTKEYATLAGGCFWCMVKPFTSYPGIKSVVSGYSGGHVDNPTYEQVCTNQTGHVEAVQITFDPEVTSFENILDIYFKTFDPTDDQGQFFDRGESYQPVIFYHDEHQKKAAEFKKQQLNEQGIFKKPVITPIKPYKNFYPAEDYHQDYYKKNPVHYYQYQRGSGRKAFIESHWGNQNA</sequence>
<reference key="1">
    <citation type="journal article" date="2001" name="Microbiology">
        <title>Molecular characterization of a chromosomal locus in Staphylococcus aureus that contributes to oxidative defence and is highly induced by the cell-wall-active antibiotic oxacillin.</title>
        <authorList>
            <person name="Singh V.K."/>
            <person name="Moskovitz J."/>
            <person name="Wilkinson B.J."/>
            <person name="Jayaswal R.K."/>
        </authorList>
    </citation>
    <scope>NUCLEOTIDE SEQUENCE [GENOMIC DNA]</scope>
    <scope>CATALYTIC ACTIVITY</scope>
</reference>
<reference key="2">
    <citation type="book" date="2006" name="Gram positive pathogens, 2nd edition">
        <title>The Staphylococcus aureus NCTC 8325 genome.</title>
        <editorList>
            <person name="Fischetti V."/>
            <person name="Novick R."/>
            <person name="Ferretti J."/>
            <person name="Portnoy D."/>
            <person name="Rood J."/>
        </editorList>
        <authorList>
            <person name="Gillaspy A.F."/>
            <person name="Worrell V."/>
            <person name="Orvis J."/>
            <person name="Roe B.A."/>
            <person name="Dyer D.W."/>
            <person name="Iandolo J.J."/>
        </authorList>
    </citation>
    <scope>NUCLEOTIDE SEQUENCE [LARGE SCALE GENOMIC DNA]</scope>
    <source>
        <strain>NCTC 8325 / PS 47</strain>
    </source>
</reference>
<reference key="3">
    <citation type="journal article" date="2002" name="Biochem. Biophys. Res. Commun.">
        <title>Purification and characterization of methionine sulfoxide reductases from mouse and Staphylococcus aureus and their substrate stereospecificity.</title>
        <authorList>
            <person name="Moskovitz J."/>
            <person name="Singh V.K."/>
            <person name="Requena J."/>
            <person name="Wilkinson B.J."/>
            <person name="Jayaswal R.K."/>
            <person name="Stadtman E.R."/>
        </authorList>
    </citation>
    <scope>CATALYTIC ACTIVITY</scope>
    <scope>STEREOSPECIFICITY</scope>
</reference>
<organism>
    <name type="scientific">Staphylococcus aureus (strain NCTC 8325 / PS 47)</name>
    <dbReference type="NCBI Taxonomy" id="93061"/>
    <lineage>
        <taxon>Bacteria</taxon>
        <taxon>Bacillati</taxon>
        <taxon>Bacillota</taxon>
        <taxon>Bacilli</taxon>
        <taxon>Bacillales</taxon>
        <taxon>Staphylococcaceae</taxon>
        <taxon>Staphylococcus</taxon>
    </lineage>
</organism>
<feature type="chain" id="PRO_0000138590" description="Peptide methionine sulfoxide reductase MsrA 2">
    <location>
        <begin position="1"/>
        <end position="177"/>
    </location>
</feature>
<feature type="active site" evidence="1">
    <location>
        <position position="12"/>
    </location>
</feature>
<keyword id="KW-0560">Oxidoreductase</keyword>
<keyword id="KW-1185">Reference proteome</keyword>
<name>MSRA2_STAA8</name>
<accession>P0A086</accession>
<accession>Q2FYK8</accession>
<accession>Q93P63</accession>
<protein>
    <recommendedName>
        <fullName>Peptide methionine sulfoxide reductase MsrA 2</fullName>
        <shortName>Protein-methionine-S-oxide reductase 2</shortName>
        <ecNumber>1.8.4.11</ecNumber>
    </recommendedName>
    <alternativeName>
        <fullName>Peptide-methionine (S)-S-oxide reductase 2</fullName>
        <shortName>Peptide Met(O) reductase 2</shortName>
    </alternativeName>
</protein>
<proteinExistence type="evidence at protein level"/>
<comment type="function">
    <text evidence="1">Has an important function as a repair enzyme for proteins that have been inactivated by oxidation. Catalyzes the reversible oxidation-reduction of methionine sulfoxide in proteins to methionine (By similarity).</text>
</comment>
<comment type="catalytic activity">
    <reaction>
        <text>L-methionyl-[protein] + [thioredoxin]-disulfide + H2O = L-methionyl-(S)-S-oxide-[protein] + [thioredoxin]-dithiol</text>
        <dbReference type="Rhea" id="RHEA:14217"/>
        <dbReference type="Rhea" id="RHEA-COMP:10698"/>
        <dbReference type="Rhea" id="RHEA-COMP:10700"/>
        <dbReference type="Rhea" id="RHEA-COMP:12313"/>
        <dbReference type="Rhea" id="RHEA-COMP:12315"/>
        <dbReference type="ChEBI" id="CHEBI:15377"/>
        <dbReference type="ChEBI" id="CHEBI:16044"/>
        <dbReference type="ChEBI" id="CHEBI:29950"/>
        <dbReference type="ChEBI" id="CHEBI:44120"/>
        <dbReference type="ChEBI" id="CHEBI:50058"/>
        <dbReference type="EC" id="1.8.4.11"/>
    </reaction>
</comment>
<comment type="catalytic activity">
    <reaction>
        <text>[thioredoxin]-disulfide + L-methionine + H2O = L-methionine (S)-S-oxide + [thioredoxin]-dithiol</text>
        <dbReference type="Rhea" id="RHEA:19993"/>
        <dbReference type="Rhea" id="RHEA-COMP:10698"/>
        <dbReference type="Rhea" id="RHEA-COMP:10700"/>
        <dbReference type="ChEBI" id="CHEBI:15377"/>
        <dbReference type="ChEBI" id="CHEBI:29950"/>
        <dbReference type="ChEBI" id="CHEBI:50058"/>
        <dbReference type="ChEBI" id="CHEBI:57844"/>
        <dbReference type="ChEBI" id="CHEBI:58772"/>
        <dbReference type="EC" id="1.8.4.11"/>
    </reaction>
</comment>
<comment type="induction">
    <text>Induced by oxacillin but not by hydrogen peroxide.</text>
</comment>
<comment type="miscellaneous">
    <text>Stereospecific for the S isomer of MetO.</text>
</comment>
<comment type="similarity">
    <text evidence="2">Belongs to the MsrA Met sulfoxide reductase family.</text>
</comment>
<evidence type="ECO:0000250" key="1"/>
<evidence type="ECO:0000305" key="2"/>
<dbReference type="EC" id="1.8.4.11"/>
<dbReference type="EMBL" id="AF349112">
    <property type="protein sequence ID" value="AAK83251.1"/>
    <property type="molecule type" value="Genomic_DNA"/>
</dbReference>
<dbReference type="EMBL" id="CP000253">
    <property type="protein sequence ID" value="ABD30524.1"/>
    <property type="molecule type" value="Genomic_DNA"/>
</dbReference>
<dbReference type="RefSeq" id="WP_000159902.1">
    <property type="nucleotide sequence ID" value="NZ_LS483365.1"/>
</dbReference>
<dbReference type="RefSeq" id="YP_499957.1">
    <property type="nucleotide sequence ID" value="NC_007795.1"/>
</dbReference>
<dbReference type="SMR" id="P0A086"/>
<dbReference type="STRING" id="93061.SAOUHSC_01432"/>
<dbReference type="PaxDb" id="1280-SAXN108_1445"/>
<dbReference type="GeneID" id="3920213"/>
<dbReference type="KEGG" id="sao:SAOUHSC_01432"/>
<dbReference type="PATRIC" id="fig|93061.5.peg.1308"/>
<dbReference type="eggNOG" id="COG0225">
    <property type="taxonomic scope" value="Bacteria"/>
</dbReference>
<dbReference type="HOGENOM" id="CLU_031040_10_1_9"/>
<dbReference type="OrthoDB" id="4174719at2"/>
<dbReference type="PHI-base" id="PHI:4580"/>
<dbReference type="PRO" id="PR:P0A086"/>
<dbReference type="Proteomes" id="UP000008816">
    <property type="component" value="Chromosome"/>
</dbReference>
<dbReference type="GO" id="GO:0005737">
    <property type="term" value="C:cytoplasm"/>
    <property type="evidence" value="ECO:0000318"/>
    <property type="project" value="GO_Central"/>
</dbReference>
<dbReference type="GO" id="GO:0036456">
    <property type="term" value="F:L-methionine-(S)-S-oxide reductase activity"/>
    <property type="evidence" value="ECO:0000318"/>
    <property type="project" value="GO_Central"/>
</dbReference>
<dbReference type="GO" id="GO:0008113">
    <property type="term" value="F:peptide-methionine (S)-S-oxide reductase activity"/>
    <property type="evidence" value="ECO:0000318"/>
    <property type="project" value="GO_Central"/>
</dbReference>
<dbReference type="GO" id="GO:0034599">
    <property type="term" value="P:cellular response to oxidative stress"/>
    <property type="evidence" value="ECO:0000318"/>
    <property type="project" value="GO_Central"/>
</dbReference>
<dbReference type="GO" id="GO:0036211">
    <property type="term" value="P:protein modification process"/>
    <property type="evidence" value="ECO:0007669"/>
    <property type="project" value="UniProtKB-UniRule"/>
</dbReference>
<dbReference type="FunFam" id="3.30.1060.10:FF:000003">
    <property type="entry name" value="Peptide methionine sulfoxide reductase MsrA"/>
    <property type="match status" value="1"/>
</dbReference>
<dbReference type="Gene3D" id="3.30.1060.10">
    <property type="entry name" value="Peptide methionine sulphoxide reductase MsrA"/>
    <property type="match status" value="1"/>
</dbReference>
<dbReference type="HAMAP" id="MF_01401">
    <property type="entry name" value="MsrA"/>
    <property type="match status" value="1"/>
</dbReference>
<dbReference type="InterPro" id="IPR002569">
    <property type="entry name" value="Met_Sox_Rdtase_MsrA_dom"/>
</dbReference>
<dbReference type="InterPro" id="IPR036509">
    <property type="entry name" value="Met_Sox_Rdtase_MsrA_sf"/>
</dbReference>
<dbReference type="NCBIfam" id="TIGR00401">
    <property type="entry name" value="msrA"/>
    <property type="match status" value="1"/>
</dbReference>
<dbReference type="PANTHER" id="PTHR43774">
    <property type="entry name" value="PEPTIDE METHIONINE SULFOXIDE REDUCTASE"/>
    <property type="match status" value="1"/>
</dbReference>
<dbReference type="PANTHER" id="PTHR43774:SF1">
    <property type="entry name" value="PEPTIDE METHIONINE SULFOXIDE REDUCTASE MSRA 2"/>
    <property type="match status" value="1"/>
</dbReference>
<dbReference type="Pfam" id="PF01625">
    <property type="entry name" value="PMSR"/>
    <property type="match status" value="1"/>
</dbReference>
<dbReference type="SUPFAM" id="SSF55068">
    <property type="entry name" value="Peptide methionine sulfoxide reductase"/>
    <property type="match status" value="1"/>
</dbReference>